<sequence length="558" mass="61887">MATMEVEAAAATVLAAPLLSSSAILKLLLFVVTLSYLARALRRPRKSTTKCSSTTCASPPAGVGNPPLPPGPVPWPVVGNLPEMLLNKPAFRWIHQMMREMGTDIACVKLGGVHVVSITCPEIAREVLRKQDANFISRPLTFASETFSGGYRNAVLSPYGDQWKKMRRVLTSEIICPSRHAWLHDKRTDEADNLTRYVYNLATKAATGDVAVDVRHVARHYCGNVIRRLMFNRRYFGEPQADGGPGPMEVLHMDAVFTSLGLLYAFCVSDYLPWLRGLDLDGHEKIVKEANVAVNRLHDTVIDDRWRQWKSGERQEMEDFLDVLITLKDAQGNPLLTIEEVKAQSQDITFAAVDNPSNAVEWALAEMVNNPEVMAKAMEELDRVVGRERLVQESDIPKLNYVKACIREAFRLHPVAPFNVPHVALADTTIAGYRVPKGSHVILSRTGLGRNPRVWDEPLRFYPDRHLATAASDVALTENDLRFISFSTGRRGCIAASLGTAMSVMLFGRLLQGFTWSKPAGVEAVDLSESKSDTFMATPLVLHAEPRLPAHLYPSISI</sequence>
<feature type="initiator methionine" description="Removed" evidence="6">
    <location>
        <position position="1"/>
    </location>
</feature>
<feature type="chain" id="PRO_0000052152" description="Tyrosine N-monooxygenase">
    <location>
        <begin position="2"/>
        <end position="558"/>
    </location>
</feature>
<feature type="transmembrane region" description="Helical" evidence="2">
    <location>
        <begin position="13"/>
        <end position="33"/>
    </location>
</feature>
<feature type="region of interest" description="Disordered" evidence="3">
    <location>
        <begin position="48"/>
        <end position="67"/>
    </location>
</feature>
<feature type="compositionally biased region" description="Low complexity" evidence="3">
    <location>
        <begin position="49"/>
        <end position="65"/>
    </location>
</feature>
<feature type="binding site" evidence="1">
    <location>
        <position position="138"/>
    </location>
    <ligand>
        <name>heme b</name>
        <dbReference type="ChEBI" id="CHEBI:60344"/>
    </ligand>
</feature>
<feature type="binding site" evidence="1">
    <location>
        <position position="167"/>
    </location>
    <ligand>
        <name>heme b</name>
        <dbReference type="ChEBI" id="CHEBI:60344"/>
    </ligand>
</feature>
<feature type="binding site" evidence="1">
    <location>
        <position position="422"/>
    </location>
    <ligand>
        <name>heme b</name>
        <dbReference type="ChEBI" id="CHEBI:60344"/>
    </ligand>
</feature>
<feature type="binding site" evidence="1">
    <location>
        <position position="491"/>
    </location>
    <ligand>
        <name>heme b</name>
        <dbReference type="ChEBI" id="CHEBI:60344"/>
    </ligand>
</feature>
<feature type="binding site" description="axial binding residue" evidence="1">
    <location>
        <position position="493"/>
    </location>
    <ligand>
        <name>heme b</name>
        <dbReference type="ChEBI" id="CHEBI:60344"/>
    </ligand>
    <ligandPart>
        <name>Fe</name>
        <dbReference type="ChEBI" id="CHEBI:18248"/>
    </ligandPart>
</feature>
<evidence type="ECO:0000250" key="1">
    <source>
        <dbReference type="UniProtKB" id="P08686"/>
    </source>
</evidence>
<evidence type="ECO:0000255" key="2"/>
<evidence type="ECO:0000256" key="3">
    <source>
        <dbReference type="SAM" id="MobiDB-lite"/>
    </source>
</evidence>
<evidence type="ECO:0000269" key="4">
    <source>
    </source>
</evidence>
<evidence type="ECO:0000269" key="5">
    <source>
    </source>
</evidence>
<evidence type="ECO:0000269" key="6">
    <source>
    </source>
</evidence>
<evidence type="ECO:0000303" key="7">
    <source>
    </source>
</evidence>
<evidence type="ECO:0000303" key="8">
    <source>
    </source>
</evidence>
<evidence type="ECO:0000305" key="9"/>
<evidence type="ECO:0000305" key="10">
    <source>
    </source>
</evidence>
<gene>
    <name type="primary">CYP79A1</name>
    <name type="synonym">CYP79</name>
</gene>
<name>C79A1_SORBI</name>
<reference key="1">
    <citation type="journal article" date="1995" name="Arch. Biochem. Biophys.">
        <title>The primary sequence of cytochrome P450tyr, the multifunctional N-hydroxylase catalyzing the conversion of L-tyrosine to p-hydroxyphenylacetaldehyde oxime in the biosynthesis of the cyanogenic glucoside dhurrin in Sorghum bicolor (L.) Moench.</title>
        <authorList>
            <person name="Koch B.M."/>
            <person name="Sibbesen O."/>
            <person name="Halkier B.A."/>
            <person name="Svendsen I."/>
            <person name="Moeller B.L."/>
        </authorList>
    </citation>
    <scope>NUCLEOTIDE SEQUENCE [MRNA]</scope>
    <scope>PROTEIN SEQUENCE OF 197-204; 277-282; 330-361; 363-376; 390-399; 454-460; 473-480; 484-490 AND 532-558</scope>
    <source>
        <strain>cv. SS1000</strain>
        <tissue>Etiolated seedling</tissue>
    </source>
</reference>
<reference key="2">
    <citation type="journal article" date="1994" name="Proc. Natl. Acad. Sci. U.S.A.">
        <title>Isolation of the heme-thiolate enzyme cytochrome P-450TYR, which catalyzes the committed step in the biosynthesis of the cyanogenic glucoside dhurrin in Sorghum bicolor (L.) Moench.</title>
        <authorList>
            <person name="Sibbesen O."/>
            <person name="Koch B."/>
            <person name="Halkier B.A."/>
            <person name="Moller B.L."/>
        </authorList>
    </citation>
    <scope>PROTEIN SEQUENCE OF 2-17</scope>
</reference>
<reference key="3">
    <citation type="journal article" date="1995" name="J. Biol. Chem.">
        <title>Cytochrome P-450TYR is a multifunctional heme-thiolate enzyme catalyzing the conversion of L-tyrosine to p-hydroxyphenylacetaldehyde oxime in the biosynthesis of the cyanogenic glucoside dhurrin in Sorghum bicolor (L.) Moench.</title>
        <authorList>
            <person name="Sibbesen O."/>
            <person name="Koch B."/>
            <person name="Halkier B.A."/>
            <person name="Moeller B.L."/>
        </authorList>
    </citation>
    <scope>FUNCTION</scope>
    <scope>CATALYTIC ACTIVITY</scope>
    <scope>BIOPHYSICOCHEMICAL PROPERTIES</scope>
</reference>
<reference key="4">
    <citation type="journal article" date="2015" name="Plant J.">
        <title>The bifurcation of the cyanogenic glucoside and glucosinolate biosynthetic pathways.</title>
        <authorList>
            <person name="Clausen M."/>
            <person name="Kannangara R.M."/>
            <person name="Olsen C.E."/>
            <person name="Blomstedt C.K."/>
            <person name="Gleadow R.M."/>
            <person name="Joergensen K."/>
            <person name="Bak S."/>
            <person name="Motawie M.S."/>
            <person name="Moeller B.L."/>
        </authorList>
    </citation>
    <scope>FUNCTION</scope>
    <scope>CATALYTIC ACTIVITY</scope>
    <scope>PATHWAY</scope>
</reference>
<organism>
    <name type="scientific">Sorghum bicolor</name>
    <name type="common">Sorghum</name>
    <name type="synonym">Sorghum vulgare</name>
    <dbReference type="NCBI Taxonomy" id="4558"/>
    <lineage>
        <taxon>Eukaryota</taxon>
        <taxon>Viridiplantae</taxon>
        <taxon>Streptophyta</taxon>
        <taxon>Embryophyta</taxon>
        <taxon>Tracheophyta</taxon>
        <taxon>Spermatophyta</taxon>
        <taxon>Magnoliopsida</taxon>
        <taxon>Liliopsida</taxon>
        <taxon>Poales</taxon>
        <taxon>Poaceae</taxon>
        <taxon>PACMAD clade</taxon>
        <taxon>Panicoideae</taxon>
        <taxon>Andropogonodae</taxon>
        <taxon>Andropogoneae</taxon>
        <taxon>Sorghinae</taxon>
        <taxon>Sorghum</taxon>
    </lineage>
</organism>
<comment type="function">
    <text evidence="4 5">Cytochrome P450 involved in the biosynthesis of the cyanogenic glucoside dhurrin. Catalyzes the conversion of L-tyrosine to p-hydroxyphenylacetaldehyde oxime, via the N-hydroxy-L-tyrosine and N,N-dihydroxy-L-tyrosine intermediates. Produces the (E) isomer of the final oxime product.</text>
</comment>
<comment type="catalytic activity">
    <reaction evidence="4 5">
        <text>L-tyrosine + 2 reduced [NADPH--hemoprotein reductase] + 2 O2 = (E)-4-hydroxyphenylacetaldehyde oxime + 2 oxidized [NADPH--hemoprotein reductase] + CO2 + 3 H2O + 2 H(+)</text>
        <dbReference type="Rhea" id="RHEA:32311"/>
        <dbReference type="Rhea" id="RHEA-COMP:11964"/>
        <dbReference type="Rhea" id="RHEA-COMP:11965"/>
        <dbReference type="ChEBI" id="CHEBI:15377"/>
        <dbReference type="ChEBI" id="CHEBI:15378"/>
        <dbReference type="ChEBI" id="CHEBI:15379"/>
        <dbReference type="ChEBI" id="CHEBI:15666"/>
        <dbReference type="ChEBI" id="CHEBI:16526"/>
        <dbReference type="ChEBI" id="CHEBI:57618"/>
        <dbReference type="ChEBI" id="CHEBI:58210"/>
        <dbReference type="ChEBI" id="CHEBI:58315"/>
        <dbReference type="EC" id="1.14.14.36"/>
    </reaction>
    <physiologicalReaction direction="left-to-right" evidence="4 10">
        <dbReference type="Rhea" id="RHEA:32312"/>
    </physiologicalReaction>
</comment>
<comment type="catalytic activity">
    <reaction evidence="5">
        <text>L-tyrosine + reduced [NADPH--hemoprotein reductase] + O2 = N-hydroxy-L-tyrosine + oxidized [NADPH--hemoprotein reductase] + H2O + 2 H(+)</text>
        <dbReference type="Rhea" id="RHEA:22464"/>
        <dbReference type="Rhea" id="RHEA-COMP:11964"/>
        <dbReference type="Rhea" id="RHEA-COMP:11965"/>
        <dbReference type="ChEBI" id="CHEBI:15377"/>
        <dbReference type="ChEBI" id="CHEBI:15378"/>
        <dbReference type="ChEBI" id="CHEBI:15379"/>
        <dbReference type="ChEBI" id="CHEBI:57618"/>
        <dbReference type="ChEBI" id="CHEBI:58210"/>
        <dbReference type="ChEBI" id="CHEBI:58315"/>
        <dbReference type="ChEBI" id="CHEBI:58547"/>
    </reaction>
    <physiologicalReaction direction="left-to-right" evidence="10">
        <dbReference type="Rhea" id="RHEA:22465"/>
    </physiologicalReaction>
</comment>
<comment type="catalytic activity">
    <reaction evidence="5">
        <text>N-hydroxy-L-tyrosine + reduced [NADPH--hemoprotein reductase] + O2 = N,N-dihydroxy-L-tyrosine + oxidized [NADPH--hemoprotein reductase] + H2O + H(+)</text>
        <dbReference type="Rhea" id="RHEA:24060"/>
        <dbReference type="Rhea" id="RHEA-COMP:11964"/>
        <dbReference type="Rhea" id="RHEA-COMP:11965"/>
        <dbReference type="ChEBI" id="CHEBI:15377"/>
        <dbReference type="ChEBI" id="CHEBI:15378"/>
        <dbReference type="ChEBI" id="CHEBI:15379"/>
        <dbReference type="ChEBI" id="CHEBI:57270"/>
        <dbReference type="ChEBI" id="CHEBI:57618"/>
        <dbReference type="ChEBI" id="CHEBI:58210"/>
        <dbReference type="ChEBI" id="CHEBI:58547"/>
    </reaction>
    <physiologicalReaction direction="left-to-right" evidence="10">
        <dbReference type="Rhea" id="RHEA:24061"/>
    </physiologicalReaction>
</comment>
<comment type="catalytic activity">
    <reaction evidence="5">
        <text>N,N-dihydroxy-L-tyrosine + H(+) = (E)-4-hydroxyphenylacetaldehyde oxime + CO2 + H2O</text>
        <dbReference type="Rhea" id="RHEA:23044"/>
        <dbReference type="ChEBI" id="CHEBI:15377"/>
        <dbReference type="ChEBI" id="CHEBI:15378"/>
        <dbReference type="ChEBI" id="CHEBI:15666"/>
        <dbReference type="ChEBI" id="CHEBI:16526"/>
        <dbReference type="ChEBI" id="CHEBI:57270"/>
    </reaction>
    <physiologicalReaction direction="left-to-right" evidence="10">
        <dbReference type="Rhea" id="RHEA:23045"/>
    </physiologicalReaction>
</comment>
<comment type="cofactor">
    <cofactor evidence="1">
        <name>heme b</name>
        <dbReference type="ChEBI" id="CHEBI:60344"/>
    </cofactor>
</comment>
<comment type="biophysicochemical properties">
    <kinetics>
        <KM evidence="5">0.14 mM for L-tyrosine (in the presence of 15 mM NaCl)</KM>
        <KM evidence="5">0.21 mM for L-tyrosine (in the absence of added salt)</KM>
        <text evidence="5">kcat is 198 min(-1) in the presence of 15 mM NaCl. kcat is 228 min(-1) in the absence of added salt.</text>
    </kinetics>
</comment>
<comment type="pathway">
    <text evidence="4">Secondary metabolite biosynthesis; dhurrin biosynthesis; dhurrin from L-tyrosine: step 1/3.</text>
</comment>
<comment type="subcellular location">
    <subcellularLocation>
        <location evidence="9">Endoplasmic reticulum membrane</location>
        <topology evidence="9">Single-pass membrane protein</topology>
    </subcellularLocation>
</comment>
<comment type="similarity">
    <text evidence="9">Belongs to the cytochrome P450 family.</text>
</comment>
<keyword id="KW-0903">Direct protein sequencing</keyword>
<keyword id="KW-0256">Endoplasmic reticulum</keyword>
<keyword id="KW-0349">Heme</keyword>
<keyword id="KW-0408">Iron</keyword>
<keyword id="KW-0472">Membrane</keyword>
<keyword id="KW-0479">Metal-binding</keyword>
<keyword id="KW-0503">Monooxygenase</keyword>
<keyword id="KW-0560">Oxidoreductase</keyword>
<keyword id="KW-0812">Transmembrane</keyword>
<keyword id="KW-1133">Transmembrane helix</keyword>
<dbReference type="EC" id="1.14.14.36" evidence="4 5"/>
<dbReference type="EMBL" id="U32624">
    <property type="protein sequence ID" value="AAA85440.1"/>
    <property type="molecule type" value="mRNA"/>
</dbReference>
<dbReference type="PIR" id="S68203">
    <property type="entry name" value="S68203"/>
</dbReference>
<dbReference type="RefSeq" id="XP_002466099.1">
    <property type="nucleotide sequence ID" value="XM_002466054.1"/>
</dbReference>
<dbReference type="SMR" id="Q43135"/>
<dbReference type="EnsemblPlants" id="EER93097">
    <property type="protein sequence ID" value="EER93097"/>
    <property type="gene ID" value="SORBI_3001G012300"/>
</dbReference>
<dbReference type="GeneID" id="8061413"/>
<dbReference type="Gramene" id="EER93097">
    <property type="protein sequence ID" value="EER93097"/>
    <property type="gene ID" value="SORBI_3001G012300"/>
</dbReference>
<dbReference type="KEGG" id="sbi:8061413"/>
<dbReference type="eggNOG" id="KOG0156">
    <property type="taxonomic scope" value="Eukaryota"/>
</dbReference>
<dbReference type="HOGENOM" id="CLU_001570_4_0_1"/>
<dbReference type="OMA" id="KWKLAGG"/>
<dbReference type="OrthoDB" id="2789670at2759"/>
<dbReference type="BioCyc" id="MetaCyc:MONOMER-521"/>
<dbReference type="BRENDA" id="1.14.14.36">
    <property type="organism ID" value="5768"/>
</dbReference>
<dbReference type="SABIO-RK" id="Q43135"/>
<dbReference type="UniPathway" id="UPA00757">
    <property type="reaction ID" value="UER00744"/>
</dbReference>
<dbReference type="ExpressionAtlas" id="Q43135">
    <property type="expression patterns" value="baseline and differential"/>
</dbReference>
<dbReference type="GO" id="GO:0005789">
    <property type="term" value="C:endoplasmic reticulum membrane"/>
    <property type="evidence" value="ECO:0007669"/>
    <property type="project" value="UniProtKB-SubCell"/>
</dbReference>
<dbReference type="GO" id="GO:0020037">
    <property type="term" value="F:heme binding"/>
    <property type="evidence" value="ECO:0007669"/>
    <property type="project" value="InterPro"/>
</dbReference>
<dbReference type="GO" id="GO:0005506">
    <property type="term" value="F:iron ion binding"/>
    <property type="evidence" value="ECO:0007669"/>
    <property type="project" value="InterPro"/>
</dbReference>
<dbReference type="GO" id="GO:0050370">
    <property type="term" value="F:tyrosine N-monooxygenase activity"/>
    <property type="evidence" value="ECO:0007669"/>
    <property type="project" value="RHEA"/>
</dbReference>
<dbReference type="GO" id="GO:0010132">
    <property type="term" value="P:dhurrin biosynthetic process"/>
    <property type="evidence" value="ECO:0007669"/>
    <property type="project" value="UniProtKB-UniPathway"/>
</dbReference>
<dbReference type="CDD" id="cd20658">
    <property type="entry name" value="CYP79"/>
    <property type="match status" value="1"/>
</dbReference>
<dbReference type="FunFam" id="1.10.630.10:FF:000037">
    <property type="entry name" value="Cytochrome P450 9"/>
    <property type="match status" value="1"/>
</dbReference>
<dbReference type="Gene3D" id="1.10.630.10">
    <property type="entry name" value="Cytochrome P450"/>
    <property type="match status" value="1"/>
</dbReference>
<dbReference type="InterPro" id="IPR001128">
    <property type="entry name" value="Cyt_P450"/>
</dbReference>
<dbReference type="InterPro" id="IPR017972">
    <property type="entry name" value="Cyt_P450_CS"/>
</dbReference>
<dbReference type="InterPro" id="IPR002401">
    <property type="entry name" value="Cyt_P450_E_grp-I"/>
</dbReference>
<dbReference type="InterPro" id="IPR036396">
    <property type="entry name" value="Cyt_P450_sf"/>
</dbReference>
<dbReference type="PANTHER" id="PTHR47944">
    <property type="entry name" value="CYTOCHROME P450 98A9"/>
    <property type="match status" value="1"/>
</dbReference>
<dbReference type="PANTHER" id="PTHR47944:SF4">
    <property type="entry name" value="OS09G0441700 PROTEIN"/>
    <property type="match status" value="1"/>
</dbReference>
<dbReference type="Pfam" id="PF00067">
    <property type="entry name" value="p450"/>
    <property type="match status" value="1"/>
</dbReference>
<dbReference type="PRINTS" id="PR00463">
    <property type="entry name" value="EP450I"/>
</dbReference>
<dbReference type="PRINTS" id="PR00385">
    <property type="entry name" value="P450"/>
</dbReference>
<dbReference type="SUPFAM" id="SSF48264">
    <property type="entry name" value="Cytochrome P450"/>
    <property type="match status" value="1"/>
</dbReference>
<dbReference type="PROSITE" id="PS00086">
    <property type="entry name" value="CYTOCHROME_P450"/>
    <property type="match status" value="1"/>
</dbReference>
<proteinExistence type="evidence at protein level"/>
<accession>Q43135</accession>
<protein>
    <recommendedName>
        <fullName evidence="10">Tyrosine N-monooxygenase</fullName>
        <ecNumber evidence="4 5">1.14.14.36</ecNumber>
    </recommendedName>
    <alternativeName>
        <fullName>Cytochrome P450 79A1</fullName>
    </alternativeName>
    <alternativeName>
        <fullName evidence="7 8">Cytochrome P450Tyr</fullName>
    </alternativeName>
</protein>